<reference key="1">
    <citation type="journal article" date="1997" name="Nature">
        <title>The complete genome sequence of the hyperthermophilic, sulphate-reducing archaeon Archaeoglobus fulgidus.</title>
        <authorList>
            <person name="Klenk H.-P."/>
            <person name="Clayton R.A."/>
            <person name="Tomb J.-F."/>
            <person name="White O."/>
            <person name="Nelson K.E."/>
            <person name="Ketchum K.A."/>
            <person name="Dodson R.J."/>
            <person name="Gwinn M.L."/>
            <person name="Hickey E.K."/>
            <person name="Peterson J.D."/>
            <person name="Richardson D.L."/>
            <person name="Kerlavage A.R."/>
            <person name="Graham D.E."/>
            <person name="Kyrpides N.C."/>
            <person name="Fleischmann R.D."/>
            <person name="Quackenbush J."/>
            <person name="Lee N.H."/>
            <person name="Sutton G.G."/>
            <person name="Gill S.R."/>
            <person name="Kirkness E.F."/>
            <person name="Dougherty B.A."/>
            <person name="McKenney K."/>
            <person name="Adams M.D."/>
            <person name="Loftus B.J."/>
            <person name="Peterson S.N."/>
            <person name="Reich C.I."/>
            <person name="McNeil L.K."/>
            <person name="Badger J.H."/>
            <person name="Glodek A."/>
            <person name="Zhou L."/>
            <person name="Overbeek R."/>
            <person name="Gocayne J.D."/>
            <person name="Weidman J.F."/>
            <person name="McDonald L.A."/>
            <person name="Utterback T.R."/>
            <person name="Cotton M.D."/>
            <person name="Spriggs T."/>
            <person name="Artiach P."/>
            <person name="Kaine B.P."/>
            <person name="Sykes S.M."/>
            <person name="Sadow P.W."/>
            <person name="D'Andrea K.P."/>
            <person name="Bowman C."/>
            <person name="Fujii C."/>
            <person name="Garland S.A."/>
            <person name="Mason T.M."/>
            <person name="Olsen G.J."/>
            <person name="Fraser C.M."/>
            <person name="Smith H.O."/>
            <person name="Woese C.R."/>
            <person name="Venter J.C."/>
        </authorList>
    </citation>
    <scope>NUCLEOTIDE SEQUENCE [LARGE SCALE GENOMIC DNA]</scope>
    <source>
        <strain>ATCC 49558 / DSM 4304 / JCM 9628 / NBRC 100126 / VC-16</strain>
    </source>
</reference>
<sequence>MREEIEKHFRIYGEEKIGKTVRFYVVPLSPESEIRKLLHLLSQSYEVGLRYQYGEMVLELKEIERKESYLTNIILFMQPSLPPQPLVQPSTVRR</sequence>
<protein>
    <recommendedName>
        <fullName>Uncharacterized protein AF_0054</fullName>
    </recommendedName>
</protein>
<name>Y054_ARCFU</name>
<proteinExistence type="predicted"/>
<dbReference type="EMBL" id="AE000782">
    <property type="protein sequence ID" value="AAB91177.1"/>
    <property type="molecule type" value="Genomic_DNA"/>
</dbReference>
<dbReference type="PIR" id="F69256">
    <property type="entry name" value="F69256"/>
</dbReference>
<dbReference type="STRING" id="224325.AF_0054"/>
<dbReference type="PaxDb" id="224325-AF_0054"/>
<dbReference type="EnsemblBacteria" id="AAB91177">
    <property type="protein sequence ID" value="AAB91177"/>
    <property type="gene ID" value="AF_0054"/>
</dbReference>
<dbReference type="KEGG" id="afu:AF_0054"/>
<dbReference type="eggNOG" id="arCOG00609">
    <property type="taxonomic scope" value="Archaea"/>
</dbReference>
<dbReference type="HOGENOM" id="CLU_2379224_0_0_2"/>
<dbReference type="Proteomes" id="UP000002199">
    <property type="component" value="Chromosome"/>
</dbReference>
<organism>
    <name type="scientific">Archaeoglobus fulgidus (strain ATCC 49558 / DSM 4304 / JCM 9628 / NBRC 100126 / VC-16)</name>
    <dbReference type="NCBI Taxonomy" id="224325"/>
    <lineage>
        <taxon>Archaea</taxon>
        <taxon>Methanobacteriati</taxon>
        <taxon>Methanobacteriota</taxon>
        <taxon>Archaeoglobi</taxon>
        <taxon>Archaeoglobales</taxon>
        <taxon>Archaeoglobaceae</taxon>
        <taxon>Archaeoglobus</taxon>
    </lineage>
</organism>
<accession>O30182</accession>
<feature type="chain" id="PRO_0000127816" description="Uncharacterized protein AF_0054">
    <location>
        <begin position="1"/>
        <end position="94"/>
    </location>
</feature>
<gene>
    <name type="ordered locus">AF_0054</name>
</gene>
<keyword id="KW-1185">Reference proteome</keyword>